<reference key="1">
    <citation type="journal article" date="2002" name="Nature">
        <title>Molecular evolution of FOXP2, a gene involved in speech and language.</title>
        <authorList>
            <person name="Enard W."/>
            <person name="Przeworski M."/>
            <person name="Fisher S.E."/>
            <person name="Lai C.S.L."/>
            <person name="Wiebe V."/>
            <person name="Kitano T."/>
            <person name="Monaco A.P."/>
            <person name="Paeaebo S."/>
        </authorList>
    </citation>
    <scope>NUCLEOTIDE SEQUENCE [MRNA]</scope>
</reference>
<accession>Q8MJ97</accession>
<name>FOXP2_MACMU</name>
<proteinExistence type="evidence at transcript level"/>
<evidence type="ECO:0000250" key="1"/>
<evidence type="ECO:0000250" key="2">
    <source>
        <dbReference type="UniProtKB" id="O15409"/>
    </source>
</evidence>
<evidence type="ECO:0000250" key="3">
    <source>
        <dbReference type="UniProtKB" id="P58463"/>
    </source>
</evidence>
<evidence type="ECO:0000255" key="4">
    <source>
        <dbReference type="PROSITE-ProRule" id="PRU00089"/>
    </source>
</evidence>
<evidence type="ECO:0000256" key="5">
    <source>
        <dbReference type="SAM" id="MobiDB-lite"/>
    </source>
</evidence>
<evidence type="ECO:0000305" key="6"/>
<gene>
    <name type="primary">FOXP2</name>
</gene>
<protein>
    <recommendedName>
        <fullName>Forkhead box protein P2</fullName>
    </recommendedName>
</protein>
<comment type="function">
    <text evidence="1">Transcriptional repressor that may play a role in the specification and differentiation of lung epithelium. May also play a role in developing neural, gastrointestinal and cardiovascular tissues. Can act with CTBP1 to synergistically repress transcription but CTPBP1 is not essential. Plays a role in synapse formation by regulating SRPX2 levels (By similarity).</text>
</comment>
<comment type="subunit">
    <text evidence="2 3">Forms homodimers and heterodimers with FOXP1 and FOXP4. Dimerization is required for DNA-binding. Interacts with CTBP1 (By similarity). Interacts with FOXP1 (By similarity). Interacts with TBR1 (By similarity). Interacts with ZMYM2 (By similarity).</text>
</comment>
<comment type="subcellular location">
    <subcellularLocation>
        <location evidence="6">Nucleus</location>
    </subcellularLocation>
</comment>
<comment type="domain">
    <text evidence="1">The leucine-zipper is required for dimerization and transcriptional repression.</text>
</comment>
<keyword id="KW-0238">DNA-binding</keyword>
<keyword id="KW-0479">Metal-binding</keyword>
<keyword id="KW-0539">Nucleus</keyword>
<keyword id="KW-1185">Reference proteome</keyword>
<keyword id="KW-0678">Repressor</keyword>
<keyword id="KW-0804">Transcription</keyword>
<keyword id="KW-0805">Transcription regulation</keyword>
<keyword id="KW-0862">Zinc</keyword>
<keyword id="KW-0863">Zinc-finger</keyword>
<organism>
    <name type="scientific">Macaca mulatta</name>
    <name type="common">Rhesus macaque</name>
    <dbReference type="NCBI Taxonomy" id="9544"/>
    <lineage>
        <taxon>Eukaryota</taxon>
        <taxon>Metazoa</taxon>
        <taxon>Chordata</taxon>
        <taxon>Craniata</taxon>
        <taxon>Vertebrata</taxon>
        <taxon>Euteleostomi</taxon>
        <taxon>Mammalia</taxon>
        <taxon>Eutheria</taxon>
        <taxon>Euarchontoglires</taxon>
        <taxon>Primates</taxon>
        <taxon>Haplorrhini</taxon>
        <taxon>Catarrhini</taxon>
        <taxon>Cercopithecidae</taxon>
        <taxon>Cercopithecinae</taxon>
        <taxon>Macaca</taxon>
    </lineage>
</organism>
<dbReference type="EMBL" id="AF512950">
    <property type="protein sequence ID" value="AAN03388.1"/>
    <property type="molecule type" value="mRNA"/>
</dbReference>
<dbReference type="RefSeq" id="NP_001028193.1">
    <property type="nucleotide sequence ID" value="NM_001033021.1"/>
</dbReference>
<dbReference type="RefSeq" id="XP_014990203.1">
    <property type="nucleotide sequence ID" value="XM_015134717.2"/>
</dbReference>
<dbReference type="SMR" id="Q8MJ97"/>
<dbReference type="FunCoup" id="Q8MJ97">
    <property type="interactions" value="1419"/>
</dbReference>
<dbReference type="STRING" id="9544.ENSMMUP00000010512"/>
<dbReference type="PaxDb" id="9544-ENSMMUP00000010501"/>
<dbReference type="Ensembl" id="ENSMMUT00000011202.3">
    <property type="protein sequence ID" value="ENSMMUP00000010501.3"/>
    <property type="gene ID" value="ENSMMUG00000008005.4"/>
</dbReference>
<dbReference type="GeneID" id="613237"/>
<dbReference type="KEGG" id="mcc:613237"/>
<dbReference type="CTD" id="93986"/>
<dbReference type="VEuPathDB" id="HostDB:ENSMMUG00000008005"/>
<dbReference type="VGNC" id="VGNC:72720">
    <property type="gene designation" value="FOXP2"/>
</dbReference>
<dbReference type="eggNOG" id="KOG4385">
    <property type="taxonomic scope" value="Eukaryota"/>
</dbReference>
<dbReference type="GeneTree" id="ENSGT00940000155480"/>
<dbReference type="HOGENOM" id="CLU_019502_3_1_1"/>
<dbReference type="InParanoid" id="Q8MJ97"/>
<dbReference type="OrthoDB" id="5830876at2759"/>
<dbReference type="Proteomes" id="UP000006718">
    <property type="component" value="Chromosome 3"/>
</dbReference>
<dbReference type="Bgee" id="ENSMMUG00000008005">
    <property type="expression patterns" value="Expressed in adipose tissue and 20 other cell types or tissues"/>
</dbReference>
<dbReference type="ExpressionAtlas" id="Q8MJ97">
    <property type="expression patterns" value="baseline"/>
</dbReference>
<dbReference type="GO" id="GO:0005634">
    <property type="term" value="C:nucleus"/>
    <property type="evidence" value="ECO:0000318"/>
    <property type="project" value="GO_Central"/>
</dbReference>
<dbReference type="GO" id="GO:0003677">
    <property type="term" value="F:DNA binding"/>
    <property type="evidence" value="ECO:0000250"/>
    <property type="project" value="UniProtKB"/>
</dbReference>
<dbReference type="GO" id="GO:0001227">
    <property type="term" value="F:DNA-binding transcription repressor activity, RNA polymerase II-specific"/>
    <property type="evidence" value="ECO:0000318"/>
    <property type="project" value="GO_Central"/>
</dbReference>
<dbReference type="GO" id="GO:0042803">
    <property type="term" value="F:protein homodimerization activity"/>
    <property type="evidence" value="ECO:0000250"/>
    <property type="project" value="UniProtKB"/>
</dbReference>
<dbReference type="GO" id="GO:0000978">
    <property type="term" value="F:RNA polymerase II cis-regulatory region sequence-specific DNA binding"/>
    <property type="evidence" value="ECO:0000318"/>
    <property type="project" value="GO_Central"/>
</dbReference>
<dbReference type="GO" id="GO:0008270">
    <property type="term" value="F:zinc ion binding"/>
    <property type="evidence" value="ECO:0007669"/>
    <property type="project" value="UniProtKB-KW"/>
</dbReference>
<dbReference type="GO" id="GO:0021757">
    <property type="term" value="P:caudate nucleus development"/>
    <property type="evidence" value="ECO:0000250"/>
    <property type="project" value="UniProtKB"/>
</dbReference>
<dbReference type="GO" id="GO:0021758">
    <property type="term" value="P:putamen development"/>
    <property type="evidence" value="ECO:0000250"/>
    <property type="project" value="UniProtKB"/>
</dbReference>
<dbReference type="GO" id="GO:0006357">
    <property type="term" value="P:regulation of transcription by RNA polymerase II"/>
    <property type="evidence" value="ECO:0000318"/>
    <property type="project" value="GO_Central"/>
</dbReference>
<dbReference type="CDD" id="cd20065">
    <property type="entry name" value="FH_FOXP2"/>
    <property type="match status" value="1"/>
</dbReference>
<dbReference type="FunFam" id="1.20.5.340:FF:000005">
    <property type="entry name" value="Forkhead box P1, isoform CRA_f"/>
    <property type="match status" value="1"/>
</dbReference>
<dbReference type="FunFam" id="1.10.10.10:FF:000010">
    <property type="entry name" value="Forkhead box P2 isoform B"/>
    <property type="match status" value="1"/>
</dbReference>
<dbReference type="Gene3D" id="1.20.5.340">
    <property type="match status" value="1"/>
</dbReference>
<dbReference type="Gene3D" id="1.10.10.10">
    <property type="entry name" value="Winged helix-like DNA-binding domain superfamily/Winged helix DNA-binding domain"/>
    <property type="match status" value="1"/>
</dbReference>
<dbReference type="InterPro" id="IPR047412">
    <property type="entry name" value="FH_FOXP1_P2"/>
</dbReference>
<dbReference type="InterPro" id="IPR001766">
    <property type="entry name" value="Fork_head_dom"/>
</dbReference>
<dbReference type="InterPro" id="IPR050998">
    <property type="entry name" value="FOXP"/>
</dbReference>
<dbReference type="InterPro" id="IPR032354">
    <property type="entry name" value="FOXP-CC"/>
</dbReference>
<dbReference type="InterPro" id="IPR030456">
    <property type="entry name" value="TF_fork_head_CS_2"/>
</dbReference>
<dbReference type="InterPro" id="IPR036388">
    <property type="entry name" value="WH-like_DNA-bd_sf"/>
</dbReference>
<dbReference type="InterPro" id="IPR036390">
    <property type="entry name" value="WH_DNA-bd_sf"/>
</dbReference>
<dbReference type="PANTHER" id="PTHR45796">
    <property type="entry name" value="FORKHEAD BOX P, ISOFORM C"/>
    <property type="match status" value="1"/>
</dbReference>
<dbReference type="PANTHER" id="PTHR45796:SF1">
    <property type="entry name" value="FORKHEAD BOX PROTEIN P2"/>
    <property type="match status" value="1"/>
</dbReference>
<dbReference type="Pfam" id="PF00250">
    <property type="entry name" value="Forkhead"/>
    <property type="match status" value="1"/>
</dbReference>
<dbReference type="Pfam" id="PF16159">
    <property type="entry name" value="FOXP-CC"/>
    <property type="match status" value="1"/>
</dbReference>
<dbReference type="PRINTS" id="PR00053">
    <property type="entry name" value="FORKHEAD"/>
</dbReference>
<dbReference type="SMART" id="SM00339">
    <property type="entry name" value="FH"/>
    <property type="match status" value="1"/>
</dbReference>
<dbReference type="SUPFAM" id="SSF46785">
    <property type="entry name" value="Winged helix' DNA-binding domain"/>
    <property type="match status" value="1"/>
</dbReference>
<dbReference type="PROSITE" id="PS00658">
    <property type="entry name" value="FORK_HEAD_2"/>
    <property type="match status" value="1"/>
</dbReference>
<dbReference type="PROSITE" id="PS50039">
    <property type="entry name" value="FORK_HEAD_3"/>
    <property type="match status" value="1"/>
</dbReference>
<dbReference type="PROSITE" id="PS00028">
    <property type="entry name" value="ZINC_FINGER_C2H2_1"/>
    <property type="match status" value="1"/>
</dbReference>
<feature type="chain" id="PRO_0000091881" description="Forkhead box protein P2">
    <location>
        <begin position="1"/>
        <end position="714"/>
    </location>
</feature>
<feature type="zinc finger region" description="C2H2-type">
    <location>
        <begin position="345"/>
        <end position="370"/>
    </location>
</feature>
<feature type="DNA-binding region" description="Fork-head" evidence="4">
    <location>
        <begin position="503"/>
        <end position="593"/>
    </location>
</feature>
<feature type="region of interest" description="Disordered" evidence="5">
    <location>
        <begin position="1"/>
        <end position="45"/>
    </location>
</feature>
<feature type="region of interest" description="Disordered" evidence="5">
    <location>
        <begin position="284"/>
        <end position="338"/>
    </location>
</feature>
<feature type="region of interest" description="Leucine-zipper">
    <location>
        <begin position="387"/>
        <end position="408"/>
    </location>
</feature>
<feature type="region of interest" description="CTBP1-binding" evidence="1">
    <location>
        <begin position="421"/>
        <end position="425"/>
    </location>
</feature>
<feature type="region of interest" description="Disordered" evidence="5">
    <location>
        <begin position="437"/>
        <end position="464"/>
    </location>
</feature>
<feature type="region of interest" description="Disordered" evidence="5">
    <location>
        <begin position="648"/>
        <end position="667"/>
    </location>
</feature>
<feature type="region of interest" description="Disordered" evidence="5">
    <location>
        <begin position="677"/>
        <end position="714"/>
    </location>
</feature>
<feature type="compositionally biased region" description="Polar residues" evidence="5">
    <location>
        <begin position="1"/>
        <end position="28"/>
    </location>
</feature>
<feature type="compositionally biased region" description="Low complexity" evidence="5">
    <location>
        <begin position="291"/>
        <end position="304"/>
    </location>
</feature>
<feature type="compositionally biased region" description="Polar residues" evidence="5">
    <location>
        <begin position="314"/>
        <end position="323"/>
    </location>
</feature>
<feature type="compositionally biased region" description="Basic and acidic residues" evidence="5">
    <location>
        <begin position="325"/>
        <end position="336"/>
    </location>
</feature>
<feature type="compositionally biased region" description="Low complexity" evidence="5">
    <location>
        <begin position="437"/>
        <end position="458"/>
    </location>
</feature>
<feature type="compositionally biased region" description="Acidic residues" evidence="5">
    <location>
        <begin position="698"/>
        <end position="714"/>
    </location>
</feature>
<sequence>MMQESATETISNSSMNQNGMSTLSSQLDAGSRDGRSSGDTSSEVSTVELLHLQQQQALQAARQLLLQQQTSGLKSPKSSDKQRPLQVPVSVAMMTPQVITPQQMQQILQQQVLSPQQLQALLQQQQAVMLQQQQLQEFYKKQQEQLHLQLLQQQQQQQQQQQQQQQQQQQQQQQQQQQQQQQQQQQQQQQHPGKQAKEQQQQQQQQQQLAAQQLVFQQQLLQMQQLQQQQHLLSLQRQGLISIPPGQAALPVQSLPQAGLSPAEIQQLWKEVTGVHSMEDNGIKHGGLDLTTNNSSSTTSSTTSKASPPITHHSIVNGQSSVLNARRDSSSHEETGASHTLYGHGVCKWPGCESICEDFGQFLKHLNNEHALDDRSTAQCRVQMQVVQQLEIQLSKERERLQAMMTHLHMRPSEPKPSPKPLNLVSSVTMSKNMLETSPQSLPQTPTTPTAPVTPITQGPSVITPASVPNVGAIRRRHSDKYNIPMSSEIAPNYEFYKNADVRPPFTYATLIRQAIMESSDRQLTLNEIYSWFTRTFAYFRRNAATWKNAVRHNLSLHKCFVRVENVKGAVWTVDEVEYQKRRSQKITGSPTLVKNIPTSLGYGAALNASLQAALAESSLPLLSNPGLINNASSGLLQAVHEDLNGSLDHIDSNGNSSPGCSPQPHIHSIHVKEEPVIAEDEDCPMSLVTTANHSPELEDDREIEEEPLSEDLE</sequence>